<gene>
    <name type="primary">mnhC1</name>
    <name type="synonym">mrpC1</name>
</gene>
<reference key="1">
    <citation type="journal article" date="1998" name="J. Bacteriol.">
        <title>A putative multisubunit Na+/H+ antiporter from Staphylococcus aureus.</title>
        <authorList>
            <person name="Hiramatsu T."/>
            <person name="Kodama K."/>
            <person name="Kuroda T."/>
            <person name="Mizushima T."/>
            <person name="Tsuchiya T."/>
        </authorList>
    </citation>
    <scope>NUCLEOTIDE SEQUENCE [GENOMIC DNA]</scope>
    <scope>CHARACTERIZATION OF ANTIPORTER ACTIVITY</scope>
    <source>
        <strain>ATCC 21027 / 209-P</strain>
    </source>
</reference>
<reference key="2">
    <citation type="journal article" date="2007" name="J. Bacteriol.">
        <title>Catalytic properties of Staphylococcus aureus and Bacillus members of the secondary cation/proton antiporter-3 (Mrp) family are revealed by an optimized assay in an Escherichia coli host.</title>
        <authorList>
            <person name="Swartz T.H."/>
            <person name="Ito M."/>
            <person name="Ohira T."/>
            <person name="Natsui S."/>
            <person name="Hicks D.B."/>
            <person name="Krulwich T.A."/>
        </authorList>
    </citation>
    <scope>NUCLEOTIDE SEQUENCE [GENOMIC DNA]</scope>
    <scope>CHARACTERIZATION</scope>
    <scope>PROBABLE ELECTROGENIC ANTIPORTER ACTIVITY</scope>
    <source>
        <strain>RF4220</strain>
    </source>
</reference>
<organism>
    <name type="scientific">Staphylococcus aureus</name>
    <dbReference type="NCBI Taxonomy" id="1280"/>
    <lineage>
        <taxon>Bacteria</taxon>
        <taxon>Bacillati</taxon>
        <taxon>Bacillota</taxon>
        <taxon>Bacilli</taxon>
        <taxon>Bacillales</taxon>
        <taxon>Staphylococcaceae</taxon>
        <taxon>Staphylococcus</taxon>
    </lineage>
</organism>
<protein>
    <recommendedName>
        <fullName>Na(+)/H(+) antiporter subunit C1</fullName>
    </recommendedName>
    <alternativeName>
        <fullName>Mnh complex subunit C1</fullName>
    </alternativeName>
    <alternativeName>
        <fullName>Mrp complex subunit C1</fullName>
    </alternativeName>
</protein>
<feature type="chain" id="PRO_0000089152" description="Na(+)/H(+) antiporter subunit C1">
    <location>
        <begin position="1"/>
        <end position="113"/>
    </location>
</feature>
<feature type="transmembrane region" description="Helical" evidence="1">
    <location>
        <begin position="1"/>
        <end position="21"/>
    </location>
</feature>
<feature type="transmembrane region" description="Helical" evidence="1">
    <location>
        <begin position="28"/>
        <end position="48"/>
    </location>
</feature>
<feature type="transmembrane region" description="Helical" evidence="1">
    <location>
        <begin position="72"/>
        <end position="92"/>
    </location>
</feature>
<evidence type="ECO:0000255" key="1"/>
<evidence type="ECO:0000305" key="2"/>
<accession>P60682</accession>
<accession>Q0Q2K5</accession>
<accession>Q9ZNG4</accession>
<name>MNHC1_STAAU</name>
<dbReference type="EMBL" id="AB015981">
    <property type="protein sequence ID" value="BAA35097.1"/>
    <property type="molecule type" value="Genomic_DNA"/>
</dbReference>
<dbReference type="EMBL" id="DQ659238">
    <property type="protein sequence ID" value="ABG67112.1"/>
    <property type="status" value="ALT_INIT"/>
    <property type="molecule type" value="Genomic_DNA"/>
</dbReference>
<dbReference type="PIR" id="G89861">
    <property type="entry name" value="G89861"/>
</dbReference>
<dbReference type="RefSeq" id="WP_000402803.1">
    <property type="nucleotide sequence ID" value="NZ_WYDB01000003.1"/>
</dbReference>
<dbReference type="SMR" id="P60682"/>
<dbReference type="TCDB" id="2.A.63.1.3">
    <property type="family name" value="the monovalent cation (k(+) or na(+)):proton antiporter-3 (cpa3) family"/>
</dbReference>
<dbReference type="GeneID" id="98345271"/>
<dbReference type="OMA" id="YRVYEEH"/>
<dbReference type="GO" id="GO:0005886">
    <property type="term" value="C:plasma membrane"/>
    <property type="evidence" value="ECO:0007669"/>
    <property type="project" value="UniProtKB-SubCell"/>
</dbReference>
<dbReference type="GO" id="GO:0015297">
    <property type="term" value="F:antiporter activity"/>
    <property type="evidence" value="ECO:0007669"/>
    <property type="project" value="UniProtKB-KW"/>
</dbReference>
<dbReference type="GO" id="GO:0008324">
    <property type="term" value="F:monoatomic cation transmembrane transporter activity"/>
    <property type="evidence" value="ECO:0007669"/>
    <property type="project" value="InterPro"/>
</dbReference>
<dbReference type="GO" id="GO:1902600">
    <property type="term" value="P:proton transmembrane transport"/>
    <property type="evidence" value="ECO:0007669"/>
    <property type="project" value="UniProtKB-KW"/>
</dbReference>
<dbReference type="GO" id="GO:0006814">
    <property type="term" value="P:sodium ion transport"/>
    <property type="evidence" value="ECO:0007669"/>
    <property type="project" value="UniProtKB-KW"/>
</dbReference>
<dbReference type="Gene3D" id="1.10.287.3510">
    <property type="match status" value="1"/>
</dbReference>
<dbReference type="InterPro" id="IPR050601">
    <property type="entry name" value="CPA3_antiporter_subunitC"/>
</dbReference>
<dbReference type="InterPro" id="IPR006673">
    <property type="entry name" value="Mnh_C1_su"/>
</dbReference>
<dbReference type="InterPro" id="IPR039428">
    <property type="entry name" value="NUOK/Mnh_C1-like"/>
</dbReference>
<dbReference type="NCBIfam" id="TIGR00941">
    <property type="entry name" value="2a6301s03"/>
    <property type="match status" value="1"/>
</dbReference>
<dbReference type="NCBIfam" id="NF006372">
    <property type="entry name" value="PRK08600.1"/>
    <property type="match status" value="1"/>
</dbReference>
<dbReference type="NCBIfam" id="NF006573">
    <property type="entry name" value="PRK09094.1"/>
    <property type="match status" value="1"/>
</dbReference>
<dbReference type="NCBIfam" id="NF009303">
    <property type="entry name" value="PRK12660.1"/>
    <property type="match status" value="1"/>
</dbReference>
<dbReference type="PANTHER" id="PTHR34583">
    <property type="entry name" value="ANTIPORTER SUBUNIT MNHC2-RELATED"/>
    <property type="match status" value="1"/>
</dbReference>
<dbReference type="PANTHER" id="PTHR34583:SF2">
    <property type="entry name" value="ANTIPORTER SUBUNIT MNHC2-RELATED"/>
    <property type="match status" value="1"/>
</dbReference>
<dbReference type="Pfam" id="PF00420">
    <property type="entry name" value="Oxidored_q2"/>
    <property type="match status" value="1"/>
</dbReference>
<keyword id="KW-0050">Antiport</keyword>
<keyword id="KW-1003">Cell membrane</keyword>
<keyword id="KW-0375">Hydrogen ion transport</keyword>
<keyword id="KW-0406">Ion transport</keyword>
<keyword id="KW-0472">Membrane</keyword>
<keyword id="KW-0915">Sodium</keyword>
<keyword id="KW-0739">Sodium transport</keyword>
<keyword id="KW-0812">Transmembrane</keyword>
<keyword id="KW-1133">Transmembrane helix</keyword>
<keyword id="KW-0813">Transport</keyword>
<comment type="function">
    <text>Mnh complex is a Na(+)Li(+)/H(+) antiporter involved in Na(+) and/or Li(+) excretion. Na(+)/H(+) antiport consumes a transmembrane electrical potential, and is thus inferred to be electrogenic. Does not transport K(+), Ca(2+) or Mg(2+).</text>
</comment>
<comment type="activity regulation">
    <text>Na(+) extrusion is completely inhibited by the H(+) conductor carbonyl cyanide m-chlorophenylhydrazone (CCCP).</text>
</comment>
<comment type="subunit">
    <text>May form a heterooligomeric complex that consists of seven subunits: mnhA1, mnhB1, mnhC1, mnhD1, mnhE1, mnhF1 and mnhG1.</text>
</comment>
<comment type="subcellular location">
    <subcellularLocation>
        <location evidence="2">Cell membrane</location>
        <topology evidence="2">Multi-pass membrane protein</topology>
    </subcellularLocation>
</comment>
<comment type="similarity">
    <text evidence="2">Belongs to the CPA3 antiporters (TC 2.A.63) subunit C family.</text>
</comment>
<comment type="sequence caution" evidence="2">
    <conflict type="erroneous initiation">
        <sequence resource="EMBL-CDS" id="ABG67112"/>
    </conflict>
</comment>
<proteinExistence type="evidence at protein level"/>
<sequence>MEIIMIFVSGILTAISVYLVLSKSLIRIVMGTTLLTHAANLFLITMGGLKHGTVPIYEANVKSYVDPIPQALILTAIVIAFATTAFFLVLAFRTYKELGTDNVESMKGVPEDD</sequence>